<comment type="function">
    <text evidence="4">Transcriptional regulator required for outer hair cells (OHC) maturation and, consequently, for hearing.</text>
</comment>
<comment type="subunit">
    <text evidence="1 4">Can form homodimers (PubMed:30464345). Interacts with IKZF4 and IKZF5 (By similarity).</text>
</comment>
<comment type="subcellular location">
    <subcellularLocation>
        <location evidence="4 5">Nucleus</location>
    </subcellularLocation>
    <text evidence="5">Associates with Ikaros at centromeric heterochromatin in T-cell nuclei.</text>
</comment>
<comment type="alternative products">
    <event type="alternative splicing"/>
    <isoform>
        <id>P81183-1</id>
        <name>B</name>
        <sequence type="displayed"/>
    </isoform>
    <isoform>
        <id>P81183-2</id>
        <name>A</name>
        <sequence type="described" ref="VSP_006846"/>
    </isoform>
</comment>
<comment type="tissue specificity">
    <text evidence="4 5">Expressed in outer hair cells (OHC) of the organ of Corti (PubMed:30464345). Abundant in thymus, low expression in bone marrow and brain and no detectable expression in spleen, liver, kidney or muscle. Expressed in T-cells (PubMed:9512513).</text>
</comment>
<comment type="similarity">
    <text evidence="6">Belongs to the Ikaros C2H2-type zinc-finger protein family.</text>
</comment>
<dbReference type="EMBL" id="AF044257">
    <property type="protein sequence ID" value="AAC00513.1"/>
    <property type="molecule type" value="mRNA"/>
</dbReference>
<dbReference type="EMBL" id="AK047925">
    <property type="protein sequence ID" value="BAC33191.1"/>
    <property type="molecule type" value="mRNA"/>
</dbReference>
<dbReference type="EMBL" id="CH466548">
    <property type="protein sequence ID" value="EDL00252.1"/>
    <property type="molecule type" value="Genomic_DNA"/>
</dbReference>
<dbReference type="EMBL" id="BC138606">
    <property type="protein sequence ID" value="AAI38607.1"/>
    <property type="molecule type" value="mRNA"/>
</dbReference>
<dbReference type="EMBL" id="BC138608">
    <property type="protein sequence ID" value="AAI38609.1"/>
    <property type="molecule type" value="mRNA"/>
</dbReference>
<dbReference type="CCDS" id="CCDS15026.1">
    <molecule id="P81183-1"/>
</dbReference>
<dbReference type="RefSeq" id="NP_001389781.1">
    <molecule id="P81183-1"/>
    <property type="nucleotide sequence ID" value="NM_001402852.1"/>
</dbReference>
<dbReference type="RefSeq" id="NP_001389782.1">
    <molecule id="P81183-1"/>
    <property type="nucleotide sequence ID" value="NM_001402853.1"/>
</dbReference>
<dbReference type="RefSeq" id="NP_001389783.1">
    <molecule id="P81183-1"/>
    <property type="nucleotide sequence ID" value="NM_001402854.1"/>
</dbReference>
<dbReference type="RefSeq" id="NP_001389785.1">
    <molecule id="P81183-2"/>
    <property type="nucleotide sequence ID" value="NM_001402856.1"/>
</dbReference>
<dbReference type="RefSeq" id="NP_001389786.1">
    <molecule id="P81183-1"/>
    <property type="nucleotide sequence ID" value="NM_001402857.1"/>
</dbReference>
<dbReference type="RefSeq" id="NP_035900.2">
    <molecule id="P81183-1"/>
    <property type="nucleotide sequence ID" value="NM_011770.4"/>
</dbReference>
<dbReference type="RefSeq" id="XP_006496029.1">
    <property type="nucleotide sequence ID" value="XM_006495966.3"/>
</dbReference>
<dbReference type="RefSeq" id="XP_006496030.1">
    <property type="nucleotide sequence ID" value="XM_006495967.3"/>
</dbReference>
<dbReference type="RefSeq" id="XP_017175888.1">
    <property type="nucleotide sequence ID" value="XM_017320399.1"/>
</dbReference>
<dbReference type="BMRB" id="P81183"/>
<dbReference type="SMR" id="P81183"/>
<dbReference type="BioGRID" id="204701">
    <property type="interactions" value="1"/>
</dbReference>
<dbReference type="CORUM" id="P81183"/>
<dbReference type="FunCoup" id="P81183">
    <property type="interactions" value="1584"/>
</dbReference>
<dbReference type="IntAct" id="P81183">
    <property type="interactions" value="1"/>
</dbReference>
<dbReference type="STRING" id="10090.ENSMUSP00000027146"/>
<dbReference type="iPTMnet" id="P81183"/>
<dbReference type="PhosphoSitePlus" id="P81183"/>
<dbReference type="jPOST" id="P81183"/>
<dbReference type="PaxDb" id="10090-ENSMUSP00000027146"/>
<dbReference type="ProteomicsDB" id="266964">
    <molecule id="P81183-1"/>
</dbReference>
<dbReference type="ProteomicsDB" id="266965">
    <molecule id="P81183-2"/>
</dbReference>
<dbReference type="Antibodypedia" id="34212">
    <property type="antibodies" value="371 antibodies from 38 providers"/>
</dbReference>
<dbReference type="DNASU" id="22779"/>
<dbReference type="Ensembl" id="ENSMUST00000027146.9">
    <molecule id="P81183-1"/>
    <property type="protein sequence ID" value="ENSMUSP00000027146.3"/>
    <property type="gene ID" value="ENSMUSG00000025997.14"/>
</dbReference>
<dbReference type="Ensembl" id="ENSMUST00000187184.7">
    <molecule id="P81183-2"/>
    <property type="protein sequence ID" value="ENSMUSP00000141075.2"/>
    <property type="gene ID" value="ENSMUSG00000025997.14"/>
</dbReference>
<dbReference type="GeneID" id="22779"/>
<dbReference type="KEGG" id="mmu:22779"/>
<dbReference type="UCSC" id="uc007bjd.2">
    <molecule id="P81183-1"/>
    <property type="organism name" value="mouse"/>
</dbReference>
<dbReference type="AGR" id="MGI:1342541"/>
<dbReference type="CTD" id="22807"/>
<dbReference type="MGI" id="MGI:1342541">
    <property type="gene designation" value="Ikzf2"/>
</dbReference>
<dbReference type="VEuPathDB" id="HostDB:ENSMUSG00000025997"/>
<dbReference type="eggNOG" id="KOG1721">
    <property type="taxonomic scope" value="Eukaryota"/>
</dbReference>
<dbReference type="GeneTree" id="ENSGT00940000157137"/>
<dbReference type="HOGENOM" id="CLU_025502_0_1_1"/>
<dbReference type="InParanoid" id="P81183"/>
<dbReference type="OrthoDB" id="654211at2759"/>
<dbReference type="TreeFam" id="TF331189"/>
<dbReference type="BioGRID-ORCS" id="22779">
    <property type="hits" value="1 hit in 78 CRISPR screens"/>
</dbReference>
<dbReference type="ChiTaRS" id="Ikzf2">
    <property type="organism name" value="mouse"/>
</dbReference>
<dbReference type="PRO" id="PR:P81183"/>
<dbReference type="Proteomes" id="UP000000589">
    <property type="component" value="Chromosome 1"/>
</dbReference>
<dbReference type="RNAct" id="P81183">
    <property type="molecule type" value="protein"/>
</dbReference>
<dbReference type="Bgee" id="ENSMUSG00000025997">
    <property type="expression patterns" value="Expressed in conjunctival fornix and 190 other cell types or tissues"/>
</dbReference>
<dbReference type="ExpressionAtlas" id="P81183">
    <property type="expression patterns" value="baseline and differential"/>
</dbReference>
<dbReference type="GO" id="GO:0005634">
    <property type="term" value="C:nucleus"/>
    <property type="evidence" value="ECO:0000314"/>
    <property type="project" value="MGI"/>
</dbReference>
<dbReference type="GO" id="GO:0003677">
    <property type="term" value="F:DNA binding"/>
    <property type="evidence" value="ECO:0007669"/>
    <property type="project" value="UniProtKB-KW"/>
</dbReference>
<dbReference type="GO" id="GO:0042802">
    <property type="term" value="F:identical protein binding"/>
    <property type="evidence" value="ECO:0000353"/>
    <property type="project" value="MGI"/>
</dbReference>
<dbReference type="GO" id="GO:0008270">
    <property type="term" value="F:zinc ion binding"/>
    <property type="evidence" value="ECO:0007669"/>
    <property type="project" value="UniProtKB-KW"/>
</dbReference>
<dbReference type="GO" id="GO:0045944">
    <property type="term" value="P:positive regulation of transcription by RNA polymerase II"/>
    <property type="evidence" value="ECO:0000314"/>
    <property type="project" value="MGI"/>
</dbReference>
<dbReference type="FunFam" id="3.30.160.60:FF:000073">
    <property type="entry name" value="IKAROS family zinc finger 1"/>
    <property type="match status" value="1"/>
</dbReference>
<dbReference type="FunFam" id="3.30.160.60:FF:000525">
    <property type="entry name" value="IKAROS family zinc finger 1"/>
    <property type="match status" value="1"/>
</dbReference>
<dbReference type="FunFam" id="3.30.160.60:FF:000124">
    <property type="entry name" value="IKAROS family zinc finger 4"/>
    <property type="match status" value="1"/>
</dbReference>
<dbReference type="FunFam" id="3.30.160.60:FF:000372">
    <property type="entry name" value="IKAROS family zinc finger 4"/>
    <property type="match status" value="1"/>
</dbReference>
<dbReference type="FunFam" id="3.30.160.60:FF:000168">
    <property type="entry name" value="zinc finger protein Eos isoform X1"/>
    <property type="match status" value="1"/>
</dbReference>
<dbReference type="Gene3D" id="3.30.160.60">
    <property type="entry name" value="Classic Zinc Finger"/>
    <property type="match status" value="5"/>
</dbReference>
<dbReference type="InterPro" id="IPR050589">
    <property type="entry name" value="Ikaros_C2H2-ZF"/>
</dbReference>
<dbReference type="InterPro" id="IPR036236">
    <property type="entry name" value="Znf_C2H2_sf"/>
</dbReference>
<dbReference type="InterPro" id="IPR013087">
    <property type="entry name" value="Znf_C2H2_type"/>
</dbReference>
<dbReference type="PANTHER" id="PTHR24404">
    <property type="entry name" value="ZINC FINGER PROTEIN"/>
    <property type="match status" value="1"/>
</dbReference>
<dbReference type="PANTHER" id="PTHR24404:SF33">
    <property type="entry name" value="ZINC FINGER PROTEIN HELIOS"/>
    <property type="match status" value="1"/>
</dbReference>
<dbReference type="Pfam" id="PF00096">
    <property type="entry name" value="zf-C2H2"/>
    <property type="match status" value="3"/>
</dbReference>
<dbReference type="SMART" id="SM00355">
    <property type="entry name" value="ZnF_C2H2"/>
    <property type="match status" value="6"/>
</dbReference>
<dbReference type="SUPFAM" id="SSF57667">
    <property type="entry name" value="beta-beta-alpha zinc fingers"/>
    <property type="match status" value="3"/>
</dbReference>
<dbReference type="PROSITE" id="PS00028">
    <property type="entry name" value="ZINC_FINGER_C2H2_1"/>
    <property type="match status" value="5"/>
</dbReference>
<dbReference type="PROSITE" id="PS50157">
    <property type="entry name" value="ZINC_FINGER_C2H2_2"/>
    <property type="match status" value="4"/>
</dbReference>
<name>IKZF2_MOUSE</name>
<proteinExistence type="evidence at protein level"/>
<accession>P81183</accession>
<accession>Q8C8A3</accession>
<keyword id="KW-0007">Acetylation</keyword>
<keyword id="KW-0010">Activator</keyword>
<keyword id="KW-0025">Alternative splicing</keyword>
<keyword id="KW-0903">Direct protein sequencing</keyword>
<keyword id="KW-0238">DNA-binding</keyword>
<keyword id="KW-1009">Hearing</keyword>
<keyword id="KW-1017">Isopeptide bond</keyword>
<keyword id="KW-0479">Metal-binding</keyword>
<keyword id="KW-0539">Nucleus</keyword>
<keyword id="KW-0597">Phosphoprotein</keyword>
<keyword id="KW-1185">Reference proteome</keyword>
<keyword id="KW-0677">Repeat</keyword>
<keyword id="KW-0804">Transcription</keyword>
<keyword id="KW-0805">Transcription regulation</keyword>
<keyword id="KW-0832">Ubl conjugation</keyword>
<keyword id="KW-0862">Zinc</keyword>
<keyword id="KW-0863">Zinc-finger</keyword>
<protein>
    <recommendedName>
        <fullName>Zinc finger protein Helios</fullName>
    </recommendedName>
    <alternativeName>
        <fullName>Ikaros family zinc finger protein 2</fullName>
    </alternativeName>
</protein>
<evidence type="ECO:0000250" key="1">
    <source>
        <dbReference type="UniProtKB" id="Q9UKS7"/>
    </source>
</evidence>
<evidence type="ECO:0000255" key="2">
    <source>
        <dbReference type="PROSITE-ProRule" id="PRU00042"/>
    </source>
</evidence>
<evidence type="ECO:0000256" key="3">
    <source>
        <dbReference type="SAM" id="MobiDB-lite"/>
    </source>
</evidence>
<evidence type="ECO:0000269" key="4">
    <source>
    </source>
</evidence>
<evidence type="ECO:0000269" key="5">
    <source>
    </source>
</evidence>
<evidence type="ECO:0000305" key="6"/>
<evidence type="ECO:0007744" key="7">
    <source>
    </source>
</evidence>
<gene>
    <name type="primary">Ikzf2</name>
    <name type="synonym">Helios</name>
    <name type="synonym">Zfpn1a2</name>
    <name type="synonym">Znfn1a2</name>
</gene>
<feature type="chain" id="PRO_0000047093" description="Zinc finger protein Helios">
    <location>
        <begin position="1"/>
        <end position="526"/>
    </location>
</feature>
<feature type="zinc finger region" description="C2H2-type 1" evidence="2">
    <location>
        <begin position="112"/>
        <end position="134"/>
    </location>
</feature>
<feature type="zinc finger region" description="C2H2-type 2" evidence="2">
    <location>
        <begin position="140"/>
        <end position="162"/>
    </location>
</feature>
<feature type="zinc finger region" description="C2H2-type 3" evidence="2">
    <location>
        <begin position="168"/>
        <end position="190"/>
    </location>
</feature>
<feature type="zinc finger region" description="C2H2-type 4" evidence="2">
    <location>
        <begin position="196"/>
        <end position="219"/>
    </location>
</feature>
<feature type="zinc finger region" description="C2H2-type 5" evidence="2">
    <location>
        <begin position="471"/>
        <end position="493"/>
    </location>
</feature>
<feature type="zinc finger region" description="C2H2-type 6" evidence="2">
    <location>
        <begin position="499"/>
        <end position="523"/>
    </location>
</feature>
<feature type="region of interest" description="Disordered" evidence="3">
    <location>
        <begin position="28"/>
        <end position="94"/>
    </location>
</feature>
<feature type="region of interest" description="Disordered" evidence="3">
    <location>
        <begin position="368"/>
        <end position="435"/>
    </location>
</feature>
<feature type="compositionally biased region" description="Polar residues" evidence="3">
    <location>
        <begin position="29"/>
        <end position="50"/>
    </location>
</feature>
<feature type="compositionally biased region" description="Basic and acidic residues" evidence="3">
    <location>
        <begin position="61"/>
        <end position="77"/>
    </location>
</feature>
<feature type="compositionally biased region" description="Basic and acidic residues" evidence="3">
    <location>
        <begin position="368"/>
        <end position="379"/>
    </location>
</feature>
<feature type="modified residue" description="Phosphoserine" evidence="7">
    <location>
        <position position="56"/>
    </location>
</feature>
<feature type="modified residue" description="Phosphoserine" evidence="1">
    <location>
        <position position="78"/>
    </location>
</feature>
<feature type="modified residue" description="Phosphoserine" evidence="1">
    <location>
        <position position="79"/>
    </location>
</feature>
<feature type="modified residue" description="N6-acetyllysine" evidence="1">
    <location>
        <position position="288"/>
    </location>
</feature>
<feature type="cross-link" description="Glycyl lysine isopeptide (Lys-Gly) (interchain with G-Cter in SUMO2)" evidence="1">
    <location>
        <position position="95"/>
    </location>
</feature>
<feature type="cross-link" description="Glycyl lysine isopeptide (Lys-Gly) (interchain with G-Cter in SUMO2)" evidence="1">
    <location>
        <position position="442"/>
    </location>
</feature>
<feature type="cross-link" description="Glycyl lysine isopeptide (Lys-Gly) (interchain with G-Cter in SUMO2)" evidence="1">
    <location>
        <position position="448"/>
    </location>
</feature>
<feature type="splice variant" id="VSP_006846" description="In isoform A." evidence="6">
    <location>
        <begin position="111"/>
        <end position="136"/>
    </location>
</feature>
<feature type="mutagenesis site" description="In cello; cello mice have progressive deterioration of hearing. Results in impaired OHC electromotility. Impaired homodimerization. No effect on nuclear localization." evidence="4">
    <original>H</original>
    <variation>Q</variation>
    <location>
        <position position="517"/>
    </location>
</feature>
<feature type="sequence conflict" description="In Ref. 1; AAC00513." evidence="6" ref="1">
    <original>I</original>
    <variation>T</variation>
    <location>
        <position position="384"/>
    </location>
</feature>
<organism>
    <name type="scientific">Mus musculus</name>
    <name type="common">Mouse</name>
    <dbReference type="NCBI Taxonomy" id="10090"/>
    <lineage>
        <taxon>Eukaryota</taxon>
        <taxon>Metazoa</taxon>
        <taxon>Chordata</taxon>
        <taxon>Craniata</taxon>
        <taxon>Vertebrata</taxon>
        <taxon>Euteleostomi</taxon>
        <taxon>Mammalia</taxon>
        <taxon>Eutheria</taxon>
        <taxon>Euarchontoglires</taxon>
        <taxon>Glires</taxon>
        <taxon>Rodentia</taxon>
        <taxon>Myomorpha</taxon>
        <taxon>Muroidea</taxon>
        <taxon>Muridae</taxon>
        <taxon>Murinae</taxon>
        <taxon>Mus</taxon>
        <taxon>Mus</taxon>
    </lineage>
</organism>
<reference key="1">
    <citation type="journal article" date="1998" name="Genes Dev.">
        <title>Helios, a T cell-restricted Ikaros family member that quantitatively associates with Ikaros at centromeric heterochromatin.</title>
        <authorList>
            <person name="Hahm K."/>
            <person name="Cobb B.S."/>
            <person name="McCarty A.S."/>
            <person name="Brown K.E."/>
            <person name="Klug C.A."/>
            <person name="Lee R."/>
            <person name="Akashi K."/>
            <person name="Weissman I.L."/>
            <person name="Fisher A.G."/>
            <person name="Smale S.T."/>
        </authorList>
    </citation>
    <scope>NUCLEOTIDE SEQUENCE [MRNA]</scope>
    <scope>PROTEIN SEQUENCE OF 246-267 AND 289-306</scope>
    <scope>TISSUE SPECIFICITY</scope>
    <scope>SUBCELLULAR LOCATION</scope>
    <source>
        <strain>BALB/cJ</strain>
        <tissue>Thymus</tissue>
    </source>
</reference>
<reference key="2">
    <citation type="journal article" date="2005" name="Science">
        <title>The transcriptional landscape of the mammalian genome.</title>
        <authorList>
            <person name="Carninci P."/>
            <person name="Kasukawa T."/>
            <person name="Katayama S."/>
            <person name="Gough J."/>
            <person name="Frith M.C."/>
            <person name="Maeda N."/>
            <person name="Oyama R."/>
            <person name="Ravasi T."/>
            <person name="Lenhard B."/>
            <person name="Wells C."/>
            <person name="Kodzius R."/>
            <person name="Shimokawa K."/>
            <person name="Bajic V.B."/>
            <person name="Brenner S.E."/>
            <person name="Batalov S."/>
            <person name="Forrest A.R."/>
            <person name="Zavolan M."/>
            <person name="Davis M.J."/>
            <person name="Wilming L.G."/>
            <person name="Aidinis V."/>
            <person name="Allen J.E."/>
            <person name="Ambesi-Impiombato A."/>
            <person name="Apweiler R."/>
            <person name="Aturaliya R.N."/>
            <person name="Bailey T.L."/>
            <person name="Bansal M."/>
            <person name="Baxter L."/>
            <person name="Beisel K.W."/>
            <person name="Bersano T."/>
            <person name="Bono H."/>
            <person name="Chalk A.M."/>
            <person name="Chiu K.P."/>
            <person name="Choudhary V."/>
            <person name="Christoffels A."/>
            <person name="Clutterbuck D.R."/>
            <person name="Crowe M.L."/>
            <person name="Dalla E."/>
            <person name="Dalrymple B.P."/>
            <person name="de Bono B."/>
            <person name="Della Gatta G."/>
            <person name="di Bernardo D."/>
            <person name="Down T."/>
            <person name="Engstrom P."/>
            <person name="Fagiolini M."/>
            <person name="Faulkner G."/>
            <person name="Fletcher C.F."/>
            <person name="Fukushima T."/>
            <person name="Furuno M."/>
            <person name="Futaki S."/>
            <person name="Gariboldi M."/>
            <person name="Georgii-Hemming P."/>
            <person name="Gingeras T.R."/>
            <person name="Gojobori T."/>
            <person name="Green R.E."/>
            <person name="Gustincich S."/>
            <person name="Harbers M."/>
            <person name="Hayashi Y."/>
            <person name="Hensch T.K."/>
            <person name="Hirokawa N."/>
            <person name="Hill D."/>
            <person name="Huminiecki L."/>
            <person name="Iacono M."/>
            <person name="Ikeo K."/>
            <person name="Iwama A."/>
            <person name="Ishikawa T."/>
            <person name="Jakt M."/>
            <person name="Kanapin A."/>
            <person name="Katoh M."/>
            <person name="Kawasawa Y."/>
            <person name="Kelso J."/>
            <person name="Kitamura H."/>
            <person name="Kitano H."/>
            <person name="Kollias G."/>
            <person name="Krishnan S.P."/>
            <person name="Kruger A."/>
            <person name="Kummerfeld S.K."/>
            <person name="Kurochkin I.V."/>
            <person name="Lareau L.F."/>
            <person name="Lazarevic D."/>
            <person name="Lipovich L."/>
            <person name="Liu J."/>
            <person name="Liuni S."/>
            <person name="McWilliam S."/>
            <person name="Madan Babu M."/>
            <person name="Madera M."/>
            <person name="Marchionni L."/>
            <person name="Matsuda H."/>
            <person name="Matsuzawa S."/>
            <person name="Miki H."/>
            <person name="Mignone F."/>
            <person name="Miyake S."/>
            <person name="Morris K."/>
            <person name="Mottagui-Tabar S."/>
            <person name="Mulder N."/>
            <person name="Nakano N."/>
            <person name="Nakauchi H."/>
            <person name="Ng P."/>
            <person name="Nilsson R."/>
            <person name="Nishiguchi S."/>
            <person name="Nishikawa S."/>
            <person name="Nori F."/>
            <person name="Ohara O."/>
            <person name="Okazaki Y."/>
            <person name="Orlando V."/>
            <person name="Pang K.C."/>
            <person name="Pavan W.J."/>
            <person name="Pavesi G."/>
            <person name="Pesole G."/>
            <person name="Petrovsky N."/>
            <person name="Piazza S."/>
            <person name="Reed J."/>
            <person name="Reid J.F."/>
            <person name="Ring B.Z."/>
            <person name="Ringwald M."/>
            <person name="Rost B."/>
            <person name="Ruan Y."/>
            <person name="Salzberg S.L."/>
            <person name="Sandelin A."/>
            <person name="Schneider C."/>
            <person name="Schoenbach C."/>
            <person name="Sekiguchi K."/>
            <person name="Semple C.A."/>
            <person name="Seno S."/>
            <person name="Sessa L."/>
            <person name="Sheng Y."/>
            <person name="Shibata Y."/>
            <person name="Shimada H."/>
            <person name="Shimada K."/>
            <person name="Silva D."/>
            <person name="Sinclair B."/>
            <person name="Sperling S."/>
            <person name="Stupka E."/>
            <person name="Sugiura K."/>
            <person name="Sultana R."/>
            <person name="Takenaka Y."/>
            <person name="Taki K."/>
            <person name="Tammoja K."/>
            <person name="Tan S.L."/>
            <person name="Tang S."/>
            <person name="Taylor M.S."/>
            <person name="Tegner J."/>
            <person name="Teichmann S.A."/>
            <person name="Ueda H.R."/>
            <person name="van Nimwegen E."/>
            <person name="Verardo R."/>
            <person name="Wei C.L."/>
            <person name="Yagi K."/>
            <person name="Yamanishi H."/>
            <person name="Zabarovsky E."/>
            <person name="Zhu S."/>
            <person name="Zimmer A."/>
            <person name="Hide W."/>
            <person name="Bult C."/>
            <person name="Grimmond S.M."/>
            <person name="Teasdale R.D."/>
            <person name="Liu E.T."/>
            <person name="Brusic V."/>
            <person name="Quackenbush J."/>
            <person name="Wahlestedt C."/>
            <person name="Mattick J.S."/>
            <person name="Hume D.A."/>
            <person name="Kai C."/>
            <person name="Sasaki D."/>
            <person name="Tomaru Y."/>
            <person name="Fukuda S."/>
            <person name="Kanamori-Katayama M."/>
            <person name="Suzuki M."/>
            <person name="Aoki J."/>
            <person name="Arakawa T."/>
            <person name="Iida J."/>
            <person name="Imamura K."/>
            <person name="Itoh M."/>
            <person name="Kato T."/>
            <person name="Kawaji H."/>
            <person name="Kawagashira N."/>
            <person name="Kawashima T."/>
            <person name="Kojima M."/>
            <person name="Kondo S."/>
            <person name="Konno H."/>
            <person name="Nakano K."/>
            <person name="Ninomiya N."/>
            <person name="Nishio T."/>
            <person name="Okada M."/>
            <person name="Plessy C."/>
            <person name="Shibata K."/>
            <person name="Shiraki T."/>
            <person name="Suzuki S."/>
            <person name="Tagami M."/>
            <person name="Waki K."/>
            <person name="Watahiki A."/>
            <person name="Okamura-Oho Y."/>
            <person name="Suzuki H."/>
            <person name="Kawai J."/>
            <person name="Hayashizaki Y."/>
        </authorList>
    </citation>
    <scope>NUCLEOTIDE SEQUENCE [LARGE SCALE MRNA]</scope>
    <source>
        <strain>C57BL/6J</strain>
        <tissue>Head</tissue>
    </source>
</reference>
<reference key="3">
    <citation type="submission" date="2005-07" db="EMBL/GenBank/DDBJ databases">
        <authorList>
            <person name="Mural R.J."/>
            <person name="Adams M.D."/>
            <person name="Myers E.W."/>
            <person name="Smith H.O."/>
            <person name="Venter J.C."/>
        </authorList>
    </citation>
    <scope>NUCLEOTIDE SEQUENCE [LARGE SCALE GENOMIC DNA]</scope>
</reference>
<reference key="4">
    <citation type="journal article" date="2004" name="Genome Res.">
        <title>The status, quality, and expansion of the NIH full-length cDNA project: the Mammalian Gene Collection (MGC).</title>
        <authorList>
            <consortium name="The MGC Project Team"/>
        </authorList>
    </citation>
    <scope>NUCLEOTIDE SEQUENCE [LARGE SCALE MRNA]</scope>
    <source>
        <tissue>Brain</tissue>
    </source>
</reference>
<reference key="5">
    <citation type="journal article" date="2010" name="Cell">
        <title>A tissue-specific atlas of mouse protein phosphorylation and expression.</title>
        <authorList>
            <person name="Huttlin E.L."/>
            <person name="Jedrychowski M.P."/>
            <person name="Elias J.E."/>
            <person name="Goswami T."/>
            <person name="Rad R."/>
            <person name="Beausoleil S.A."/>
            <person name="Villen J."/>
            <person name="Haas W."/>
            <person name="Sowa M.E."/>
            <person name="Gygi S.P."/>
        </authorList>
    </citation>
    <scope>PHOSPHORYLATION [LARGE SCALE ANALYSIS] AT SER-56</scope>
    <scope>IDENTIFICATION BY MASS SPECTROMETRY [LARGE SCALE ANALYSIS]</scope>
    <source>
        <tissue>Lung</tissue>
        <tissue>Spleen</tissue>
    </source>
</reference>
<reference key="6">
    <citation type="journal article" date="2018" name="Nature">
        <title>Helios is a key transcriptional regulator of outer hair cell maturation.</title>
        <authorList>
            <person name="Chessum L."/>
            <person name="Matern M.S."/>
            <person name="Kelly M.C."/>
            <person name="Johnson S.L."/>
            <person name="Ogawa Y."/>
            <person name="Milon B."/>
            <person name="McMurray M."/>
            <person name="Driver E.C."/>
            <person name="Parker A."/>
            <person name="Song Y."/>
            <person name="Codner G."/>
            <person name="Esapa C.T."/>
            <person name="Prescott J."/>
            <person name="Trent G."/>
            <person name="Wells S."/>
            <person name="Dragich A.K."/>
            <person name="Frolenkov G.I."/>
            <person name="Kelley M.W."/>
            <person name="Marcotti W."/>
            <person name="Brown S.D.M."/>
            <person name="Elkon R."/>
            <person name="Bowl M.R."/>
            <person name="Hertzano R."/>
        </authorList>
    </citation>
    <scope>FUNCTION</scope>
    <scope>SUBCELLULAR LOCATION</scope>
    <scope>SUBUNIT</scope>
    <scope>MUTAGENESIS OF HIS-517</scope>
</reference>
<sequence length="526" mass="59401">METDAIDGYITCDNELSPEGEHANMAIDLTSSTPNGQHASPSHMTSTNSVKLEMQSDEECDRQPLSREDEIRGHDEGSSLEEPLIESSEVADNRKVQDLQGEGGIRLPNGKLKCDVCGMVCIGPNVLMVHKRSHTGERPFHCNQCGASFTQKGNLLRHIKLHSGEKPFKCPFCSYACRRRDALTGHLRTHSVGKPHKCNYCGRSYKQRSSLEEHKERCHNYLQNVSMEAAGQVMSHHVPPMEDCKEQEPIMDNNISLVPFERPAVIEKLTANMGKRKSSTPQKFVGEKLMRFSYPDIHFDMNLTYEKEAELMQSHMMDQAINNAITYLGAEALHPLMQHAPSTIAEVAPVISSAYSQVYHPNRIERPISRETSDSHENNMDGPISLIRPKSRPQEREASPSNSCLDSTDSESSHDDRQSYQGNPALNPKRKQSPAYMKEDVKALDATKAPKGSLKDIYKVFNGEGEQIRAFKCEHCRVLFLDHVMYTIHMGCHGYRDPLECNICGYRSQDRYEFSSHIVRGEHTFH</sequence>